<gene>
    <name evidence="1" type="primary">lipB</name>
    <name type="ordered locus">Daro_0288</name>
</gene>
<evidence type="ECO:0000255" key="1">
    <source>
        <dbReference type="HAMAP-Rule" id="MF_00013"/>
    </source>
</evidence>
<evidence type="ECO:0000255" key="2">
    <source>
        <dbReference type="PROSITE-ProRule" id="PRU01067"/>
    </source>
</evidence>
<feature type="chain" id="PRO_0000242716" description="Octanoyltransferase">
    <location>
        <begin position="1"/>
        <end position="205"/>
    </location>
</feature>
<feature type="domain" description="BPL/LPL catalytic" evidence="2">
    <location>
        <begin position="29"/>
        <end position="204"/>
    </location>
</feature>
<feature type="active site" description="Acyl-thioester intermediate" evidence="1">
    <location>
        <position position="166"/>
    </location>
</feature>
<feature type="binding site" evidence="1">
    <location>
        <begin position="68"/>
        <end position="75"/>
    </location>
    <ligand>
        <name>substrate</name>
    </ligand>
</feature>
<feature type="binding site" evidence="1">
    <location>
        <begin position="135"/>
        <end position="137"/>
    </location>
    <ligand>
        <name>substrate</name>
    </ligand>
</feature>
<feature type="binding site" evidence="1">
    <location>
        <begin position="148"/>
        <end position="150"/>
    </location>
    <ligand>
        <name>substrate</name>
    </ligand>
</feature>
<feature type="site" description="Lowers pKa of active site Cys" evidence="1">
    <location>
        <position position="132"/>
    </location>
</feature>
<organism>
    <name type="scientific">Dechloromonas aromatica (strain RCB)</name>
    <dbReference type="NCBI Taxonomy" id="159087"/>
    <lineage>
        <taxon>Bacteria</taxon>
        <taxon>Pseudomonadati</taxon>
        <taxon>Pseudomonadota</taxon>
        <taxon>Betaproteobacteria</taxon>
        <taxon>Rhodocyclales</taxon>
        <taxon>Azonexaceae</taxon>
        <taxon>Dechloromonas</taxon>
    </lineage>
</organism>
<protein>
    <recommendedName>
        <fullName evidence="1">Octanoyltransferase</fullName>
        <ecNumber evidence="1">2.3.1.181</ecNumber>
    </recommendedName>
    <alternativeName>
        <fullName evidence="1">Lipoate-protein ligase B</fullName>
    </alternativeName>
    <alternativeName>
        <fullName evidence="1">Lipoyl/octanoyl transferase</fullName>
    </alternativeName>
    <alternativeName>
        <fullName evidence="1">Octanoyl-[acyl-carrier-protein]-protein N-octanoyltransferase</fullName>
    </alternativeName>
</protein>
<keyword id="KW-0012">Acyltransferase</keyword>
<keyword id="KW-0963">Cytoplasm</keyword>
<keyword id="KW-0808">Transferase</keyword>
<proteinExistence type="inferred from homology"/>
<sequence>MPPVVKRLGRVDYQPTFQAMQDFTASRTAETPDEIWIVEHPPVYTLGQAGKPEHILRDVGIPLVKIDRGGQVTYHGPGQVVIYLLLDLSRLKIKVRELVTAIEQSVIDLLAEYGITAERRDGAPGVYVGEAKIAALGLRIRNGCSYHGVSLNVDMDLSPFAAINPCGYAGLKVIQTKDFNIPLTAHEAGEQLSQHLLQQLDQKNG</sequence>
<name>LIPB_DECAR</name>
<comment type="function">
    <text evidence="1">Catalyzes the transfer of endogenously produced octanoic acid from octanoyl-acyl-carrier-protein onto the lipoyl domains of lipoate-dependent enzymes. Lipoyl-ACP can also act as a substrate although octanoyl-ACP is likely to be the physiological substrate.</text>
</comment>
<comment type="catalytic activity">
    <reaction evidence="1">
        <text>octanoyl-[ACP] + L-lysyl-[protein] = N(6)-octanoyl-L-lysyl-[protein] + holo-[ACP] + H(+)</text>
        <dbReference type="Rhea" id="RHEA:17665"/>
        <dbReference type="Rhea" id="RHEA-COMP:9636"/>
        <dbReference type="Rhea" id="RHEA-COMP:9685"/>
        <dbReference type="Rhea" id="RHEA-COMP:9752"/>
        <dbReference type="Rhea" id="RHEA-COMP:9928"/>
        <dbReference type="ChEBI" id="CHEBI:15378"/>
        <dbReference type="ChEBI" id="CHEBI:29969"/>
        <dbReference type="ChEBI" id="CHEBI:64479"/>
        <dbReference type="ChEBI" id="CHEBI:78463"/>
        <dbReference type="ChEBI" id="CHEBI:78809"/>
        <dbReference type="EC" id="2.3.1.181"/>
    </reaction>
</comment>
<comment type="pathway">
    <text evidence="1">Protein modification; protein lipoylation via endogenous pathway; protein N(6)-(lipoyl)lysine from octanoyl-[acyl-carrier-protein]: step 1/2.</text>
</comment>
<comment type="subcellular location">
    <subcellularLocation>
        <location evidence="1">Cytoplasm</location>
    </subcellularLocation>
</comment>
<comment type="miscellaneous">
    <text evidence="1">In the reaction, the free carboxyl group of octanoic acid is attached via an amide linkage to the epsilon-amino group of a specific lysine residue of lipoyl domains of lipoate-dependent enzymes.</text>
</comment>
<comment type="similarity">
    <text evidence="1">Belongs to the LipB family.</text>
</comment>
<reference key="1">
    <citation type="journal article" date="2009" name="BMC Genomics">
        <title>Metabolic analysis of the soil microbe Dechloromonas aromatica str. RCB: indications of a surprisingly complex life-style and cryptic anaerobic pathways for aromatic degradation.</title>
        <authorList>
            <person name="Salinero K.K."/>
            <person name="Keller K."/>
            <person name="Feil W.S."/>
            <person name="Feil H."/>
            <person name="Trong S."/>
            <person name="Di Bartolo G."/>
            <person name="Lapidus A."/>
        </authorList>
    </citation>
    <scope>NUCLEOTIDE SEQUENCE [LARGE SCALE GENOMIC DNA]</scope>
    <source>
        <strain>RCB</strain>
    </source>
</reference>
<dbReference type="EC" id="2.3.1.181" evidence="1"/>
<dbReference type="EMBL" id="CP000089">
    <property type="protein sequence ID" value="AAZ45047.1"/>
    <property type="molecule type" value="Genomic_DNA"/>
</dbReference>
<dbReference type="SMR" id="Q47JD4"/>
<dbReference type="STRING" id="159087.Daro_0288"/>
<dbReference type="KEGG" id="dar:Daro_0288"/>
<dbReference type="eggNOG" id="COG0321">
    <property type="taxonomic scope" value="Bacteria"/>
</dbReference>
<dbReference type="HOGENOM" id="CLU_035168_3_1_4"/>
<dbReference type="UniPathway" id="UPA00538">
    <property type="reaction ID" value="UER00592"/>
</dbReference>
<dbReference type="GO" id="GO:0005737">
    <property type="term" value="C:cytoplasm"/>
    <property type="evidence" value="ECO:0007669"/>
    <property type="project" value="UniProtKB-SubCell"/>
</dbReference>
<dbReference type="GO" id="GO:0033819">
    <property type="term" value="F:lipoyl(octanoyl) transferase activity"/>
    <property type="evidence" value="ECO:0007669"/>
    <property type="project" value="UniProtKB-EC"/>
</dbReference>
<dbReference type="GO" id="GO:0036211">
    <property type="term" value="P:protein modification process"/>
    <property type="evidence" value="ECO:0007669"/>
    <property type="project" value="InterPro"/>
</dbReference>
<dbReference type="CDD" id="cd16444">
    <property type="entry name" value="LipB"/>
    <property type="match status" value="1"/>
</dbReference>
<dbReference type="FunFam" id="3.30.930.10:FF:000020">
    <property type="entry name" value="Octanoyltransferase"/>
    <property type="match status" value="1"/>
</dbReference>
<dbReference type="Gene3D" id="3.30.930.10">
    <property type="entry name" value="Bira Bifunctional Protein, Domain 2"/>
    <property type="match status" value="1"/>
</dbReference>
<dbReference type="HAMAP" id="MF_00013">
    <property type="entry name" value="LipB"/>
    <property type="match status" value="1"/>
</dbReference>
<dbReference type="InterPro" id="IPR045864">
    <property type="entry name" value="aa-tRNA-synth_II/BPL/LPL"/>
</dbReference>
<dbReference type="InterPro" id="IPR004143">
    <property type="entry name" value="BPL_LPL_catalytic"/>
</dbReference>
<dbReference type="InterPro" id="IPR000544">
    <property type="entry name" value="Octanoyltransferase"/>
</dbReference>
<dbReference type="InterPro" id="IPR020605">
    <property type="entry name" value="Octanoyltransferase_CS"/>
</dbReference>
<dbReference type="NCBIfam" id="TIGR00214">
    <property type="entry name" value="lipB"/>
    <property type="match status" value="1"/>
</dbReference>
<dbReference type="NCBIfam" id="NF010922">
    <property type="entry name" value="PRK14342.1"/>
    <property type="match status" value="1"/>
</dbReference>
<dbReference type="NCBIfam" id="NF010923">
    <property type="entry name" value="PRK14343.1"/>
    <property type="match status" value="1"/>
</dbReference>
<dbReference type="PANTHER" id="PTHR10993:SF7">
    <property type="entry name" value="LIPOYLTRANSFERASE 2, MITOCHONDRIAL-RELATED"/>
    <property type="match status" value="1"/>
</dbReference>
<dbReference type="PANTHER" id="PTHR10993">
    <property type="entry name" value="OCTANOYLTRANSFERASE"/>
    <property type="match status" value="1"/>
</dbReference>
<dbReference type="Pfam" id="PF21948">
    <property type="entry name" value="LplA-B_cat"/>
    <property type="match status" value="1"/>
</dbReference>
<dbReference type="PIRSF" id="PIRSF016262">
    <property type="entry name" value="LPLase"/>
    <property type="match status" value="1"/>
</dbReference>
<dbReference type="SUPFAM" id="SSF55681">
    <property type="entry name" value="Class II aaRS and biotin synthetases"/>
    <property type="match status" value="1"/>
</dbReference>
<dbReference type="PROSITE" id="PS51733">
    <property type="entry name" value="BPL_LPL_CATALYTIC"/>
    <property type="match status" value="1"/>
</dbReference>
<dbReference type="PROSITE" id="PS01313">
    <property type="entry name" value="LIPB"/>
    <property type="match status" value="1"/>
</dbReference>
<accession>Q47JD4</accession>